<comment type="function">
    <text>Not yet known.</text>
</comment>
<comment type="subcellular location">
    <subcellularLocation>
        <location>Plastid</location>
        <location>Chloroplast thylakoid membrane</location>
        <topology>Multi-pass membrane protein</topology>
    </subcellularLocation>
    <text>Associated with the stromal side of the thylakoid membrane.</text>
</comment>
<comment type="similarity">
    <text evidence="1">Belongs to the PsaG/PsaK family.</text>
</comment>
<protein>
    <recommendedName>
        <fullName>Photosystem I reaction center subunit V</fullName>
    </recommendedName>
    <alternativeName>
        <fullName>PS I subunit 10</fullName>
    </alternativeName>
    <alternativeName>
        <fullName>PSI-G</fullName>
    </alternativeName>
    <alternativeName>
        <fullName>Photosystem I 6.8 kDa protein</fullName>
    </alternativeName>
</protein>
<evidence type="ECO:0000305" key="1"/>
<accession>P42049</accession>
<name>PSAG_CUCSA</name>
<sequence length="14" mass="1453">ELNPSLVISLSXGL</sequence>
<keyword id="KW-0150">Chloroplast</keyword>
<keyword id="KW-0903">Direct protein sequencing</keyword>
<keyword id="KW-0472">Membrane</keyword>
<keyword id="KW-0602">Photosynthesis</keyword>
<keyword id="KW-0603">Photosystem I</keyword>
<keyword id="KW-0934">Plastid</keyword>
<keyword id="KW-0793">Thylakoid</keyword>
<keyword id="KW-0812">Transmembrane</keyword>
<gene>
    <name type="primary">PSAG</name>
</gene>
<feature type="chain" id="PRO_0000206207" description="Photosystem I reaction center subunit V">
    <location>
        <begin position="1"/>
        <end position="14" status="greater than"/>
    </location>
</feature>
<feature type="non-terminal residue">
    <location>
        <position position="14"/>
    </location>
</feature>
<reference key="1">
    <citation type="journal article" date="1991" name="Biochim. Biophys. Acta">
        <title>Characterization of genes that encode subunits of cucumber PS I complex by N-terminal sequencing.</title>
        <authorList>
            <person name="Iwasaki Y."/>
            <person name="Ishikawa H."/>
            <person name="Hibino T."/>
            <person name="Takabe T."/>
        </authorList>
    </citation>
    <scope>PROTEIN SEQUENCE</scope>
    <source>
        <tissue>Cotyledon</tissue>
    </source>
</reference>
<proteinExistence type="evidence at protein level"/>
<organism>
    <name type="scientific">Cucumis sativus</name>
    <name type="common">Cucumber</name>
    <dbReference type="NCBI Taxonomy" id="3659"/>
    <lineage>
        <taxon>Eukaryota</taxon>
        <taxon>Viridiplantae</taxon>
        <taxon>Streptophyta</taxon>
        <taxon>Embryophyta</taxon>
        <taxon>Tracheophyta</taxon>
        <taxon>Spermatophyta</taxon>
        <taxon>Magnoliopsida</taxon>
        <taxon>eudicotyledons</taxon>
        <taxon>Gunneridae</taxon>
        <taxon>Pentapetalae</taxon>
        <taxon>rosids</taxon>
        <taxon>fabids</taxon>
        <taxon>Cucurbitales</taxon>
        <taxon>Cucurbitaceae</taxon>
        <taxon>Benincaseae</taxon>
        <taxon>Cucumis</taxon>
    </lineage>
</organism>
<dbReference type="PIR" id="B56819">
    <property type="entry name" value="B56819"/>
</dbReference>
<dbReference type="GO" id="GO:0009535">
    <property type="term" value="C:chloroplast thylakoid membrane"/>
    <property type="evidence" value="ECO:0007669"/>
    <property type="project" value="UniProtKB-SubCell"/>
</dbReference>
<dbReference type="GO" id="GO:0009522">
    <property type="term" value="C:photosystem I"/>
    <property type="evidence" value="ECO:0007669"/>
    <property type="project" value="UniProtKB-KW"/>
</dbReference>
<dbReference type="GO" id="GO:0015979">
    <property type="term" value="P:photosynthesis"/>
    <property type="evidence" value="ECO:0007669"/>
    <property type="project" value="UniProtKB-KW"/>
</dbReference>